<organismHost>
    <name type="scientific">Acanthamoeba polyphaga</name>
    <name type="common">Amoeba</name>
    <dbReference type="NCBI Taxonomy" id="5757"/>
</organismHost>
<name>YR603_MIMIV</name>
<reference key="1">
    <citation type="journal article" date="2004" name="Science">
        <title>The 1.2-megabase genome sequence of Mimivirus.</title>
        <authorList>
            <person name="Raoult D."/>
            <person name="Audic S."/>
            <person name="Robert C."/>
            <person name="Abergel C."/>
            <person name="Renesto P."/>
            <person name="Ogata H."/>
            <person name="La Scola B."/>
            <person name="Susan M."/>
            <person name="Claverie J.-M."/>
        </authorList>
    </citation>
    <scope>NUCLEOTIDE SEQUENCE [LARGE SCALE GENOMIC DNA]</scope>
    <source>
        <strain>Rowbotham-Bradford</strain>
    </source>
</reference>
<organism>
    <name type="scientific">Acanthamoeba polyphaga mimivirus</name>
    <name type="common">APMV</name>
    <dbReference type="NCBI Taxonomy" id="212035"/>
    <lineage>
        <taxon>Viruses</taxon>
        <taxon>Varidnaviria</taxon>
        <taxon>Bamfordvirae</taxon>
        <taxon>Nucleocytoviricota</taxon>
        <taxon>Megaviricetes</taxon>
        <taxon>Imitervirales</taxon>
        <taxon>Mimiviridae</taxon>
        <taxon>Megamimivirinae</taxon>
        <taxon>Mimivirus</taxon>
        <taxon>Mimivirus bradfordmassiliense</taxon>
    </lineage>
</organism>
<feature type="chain" id="PRO_0000067182" description="Putative ankyrin repeat protein R603">
    <location>
        <begin position="1"/>
        <end position="309"/>
    </location>
</feature>
<feature type="repeat" description="ANK 1">
    <location>
        <begin position="53"/>
        <end position="82"/>
    </location>
</feature>
<feature type="repeat" description="ANK 2">
    <location>
        <begin position="83"/>
        <end position="112"/>
    </location>
</feature>
<feature type="repeat" description="ANK 3">
    <location>
        <begin position="114"/>
        <end position="144"/>
    </location>
</feature>
<feature type="repeat" description="ANK 4">
    <location>
        <begin position="145"/>
        <end position="176"/>
    </location>
</feature>
<feature type="repeat" description="ANK 5">
    <location>
        <begin position="177"/>
        <end position="206"/>
    </location>
</feature>
<feature type="repeat" description="ANK 6">
    <location>
        <begin position="214"/>
        <end position="243"/>
    </location>
</feature>
<feature type="repeat" description="ANK 7">
    <location>
        <begin position="245"/>
        <end position="274"/>
    </location>
</feature>
<keyword id="KW-0040">ANK repeat</keyword>
<keyword id="KW-1185">Reference proteome</keyword>
<keyword id="KW-0677">Repeat</keyword>
<dbReference type="EMBL" id="AY653733">
    <property type="protein sequence ID" value="AAV50866.1"/>
    <property type="molecule type" value="Genomic_DNA"/>
</dbReference>
<dbReference type="SMR" id="Q5UP60"/>
<dbReference type="KEGG" id="vg:9925240"/>
<dbReference type="OrthoDB" id="30451at10239"/>
<dbReference type="Proteomes" id="UP000001134">
    <property type="component" value="Genome"/>
</dbReference>
<dbReference type="Gene3D" id="1.25.40.20">
    <property type="entry name" value="Ankyrin repeat-containing domain"/>
    <property type="match status" value="1"/>
</dbReference>
<dbReference type="InterPro" id="IPR002110">
    <property type="entry name" value="Ankyrin_rpt"/>
</dbReference>
<dbReference type="InterPro" id="IPR036770">
    <property type="entry name" value="Ankyrin_rpt-contain_sf"/>
</dbReference>
<dbReference type="PANTHER" id="PTHR24198">
    <property type="entry name" value="ANKYRIN REPEAT AND PROTEIN KINASE DOMAIN-CONTAINING PROTEIN"/>
    <property type="match status" value="1"/>
</dbReference>
<dbReference type="PANTHER" id="PTHR24198:SF165">
    <property type="entry name" value="ANKYRIN REPEAT-CONTAINING PROTEIN-RELATED"/>
    <property type="match status" value="1"/>
</dbReference>
<dbReference type="SMART" id="SM00248">
    <property type="entry name" value="ANK"/>
    <property type="match status" value="5"/>
</dbReference>
<dbReference type="SUPFAM" id="SSF48403">
    <property type="entry name" value="Ankyrin repeat"/>
    <property type="match status" value="1"/>
</dbReference>
<dbReference type="PROSITE" id="PS50297">
    <property type="entry name" value="ANK_REP_REGION"/>
    <property type="match status" value="2"/>
</dbReference>
<dbReference type="PROSITE" id="PS50088">
    <property type="entry name" value="ANK_REPEAT"/>
    <property type="match status" value="1"/>
</dbReference>
<accession>Q5UP60</accession>
<proteinExistence type="predicted"/>
<sequence length="309" mass="35279">MDPSQNPRDLCQIYLEKFMVISNYRSLSFKKQKYLVIDKLSNYNNTDYRDVLQVNGYFTYCVQKNKLDAIQYLYENNLMNPENKSQLFKIAIVHGNIDVLKLVIDYGIDVSLDDHFAITVCTRPISNTENIIQLLIDNGADVTSNNNLPIKFAILKGTINKSVLDLLINNGADIHADEYFCAKYAAKCCYIFALKYIINLGIDVNMENGILLKNVLSDTAYSSNEYTYSCIKTLLENGADISFLDDNDTLKMCRGSKTRNILILLLDYGFDISFINEYQVKDSSKLSEINKILDQGIDPIKFILFTNEI</sequence>
<gene>
    <name type="ordered locus">MIMI_R603</name>
</gene>
<protein>
    <recommendedName>
        <fullName>Putative ankyrin repeat protein R603</fullName>
    </recommendedName>
</protein>